<evidence type="ECO:0000255" key="1">
    <source>
        <dbReference type="HAMAP-Rule" id="MF_00242"/>
    </source>
</evidence>
<proteinExistence type="inferred from homology"/>
<name>ARCA_SALTY</name>
<dbReference type="EC" id="3.5.3.6" evidence="1"/>
<dbReference type="EMBL" id="AE006468">
    <property type="protein sequence ID" value="AAL23286.1"/>
    <property type="molecule type" value="Genomic_DNA"/>
</dbReference>
<dbReference type="RefSeq" id="NP_463327.1">
    <property type="nucleotide sequence ID" value="NC_003197.2"/>
</dbReference>
<dbReference type="RefSeq" id="WP_000410846.1">
    <property type="nucleotide sequence ID" value="NC_003197.2"/>
</dbReference>
<dbReference type="SMR" id="Q8ZK33"/>
<dbReference type="STRING" id="99287.STM4467"/>
<dbReference type="PaxDb" id="99287-STM4467"/>
<dbReference type="GeneID" id="1255993"/>
<dbReference type="KEGG" id="stm:STM4467"/>
<dbReference type="PATRIC" id="fig|99287.12.peg.4701"/>
<dbReference type="HOGENOM" id="CLU_052662_0_0_6"/>
<dbReference type="OMA" id="CMSMPLI"/>
<dbReference type="PhylomeDB" id="Q8ZK33"/>
<dbReference type="BioCyc" id="SENT99287:STM4467-MONOMER"/>
<dbReference type="UniPathway" id="UPA00254">
    <property type="reaction ID" value="UER00364"/>
</dbReference>
<dbReference type="Proteomes" id="UP000001014">
    <property type="component" value="Chromosome"/>
</dbReference>
<dbReference type="GO" id="GO:0005737">
    <property type="term" value="C:cytoplasm"/>
    <property type="evidence" value="ECO:0007669"/>
    <property type="project" value="UniProtKB-SubCell"/>
</dbReference>
<dbReference type="GO" id="GO:0016990">
    <property type="term" value="F:arginine deiminase activity"/>
    <property type="evidence" value="ECO:0000318"/>
    <property type="project" value="GO_Central"/>
</dbReference>
<dbReference type="GO" id="GO:0019547">
    <property type="term" value="P:arginine catabolic process to ornithine"/>
    <property type="evidence" value="ECO:0007669"/>
    <property type="project" value="UniProtKB-UniRule"/>
</dbReference>
<dbReference type="GO" id="GO:0019546">
    <property type="term" value="P:arginine deiminase pathway"/>
    <property type="evidence" value="ECO:0000318"/>
    <property type="project" value="GO_Central"/>
</dbReference>
<dbReference type="FunFam" id="1.10.3930.10:FF:000002">
    <property type="entry name" value="Arginine deiminase"/>
    <property type="match status" value="1"/>
</dbReference>
<dbReference type="Gene3D" id="1.10.3930.10">
    <property type="entry name" value="Arginine deiminase"/>
    <property type="match status" value="1"/>
</dbReference>
<dbReference type="Gene3D" id="3.75.10.10">
    <property type="entry name" value="L-arginine/glycine Amidinotransferase, Chain A"/>
    <property type="match status" value="1"/>
</dbReference>
<dbReference type="HAMAP" id="MF_00242">
    <property type="entry name" value="Arg_deiminase"/>
    <property type="match status" value="1"/>
</dbReference>
<dbReference type="InterPro" id="IPR003876">
    <property type="entry name" value="Arg_deiminase"/>
</dbReference>
<dbReference type="NCBIfam" id="TIGR01078">
    <property type="entry name" value="arcA"/>
    <property type="match status" value="1"/>
</dbReference>
<dbReference type="NCBIfam" id="NF002381">
    <property type="entry name" value="PRK01388.1"/>
    <property type="match status" value="1"/>
</dbReference>
<dbReference type="PANTHER" id="PTHR47271">
    <property type="entry name" value="ARGININE DEIMINASE"/>
    <property type="match status" value="1"/>
</dbReference>
<dbReference type="PANTHER" id="PTHR47271:SF2">
    <property type="entry name" value="ARGININE DEIMINASE"/>
    <property type="match status" value="1"/>
</dbReference>
<dbReference type="Pfam" id="PF02274">
    <property type="entry name" value="ADI"/>
    <property type="match status" value="1"/>
</dbReference>
<dbReference type="PIRSF" id="PIRSF006356">
    <property type="entry name" value="Arg_deiminase"/>
    <property type="match status" value="1"/>
</dbReference>
<dbReference type="PRINTS" id="PR01466">
    <property type="entry name" value="ARGDEIMINASE"/>
</dbReference>
<dbReference type="SUPFAM" id="SSF55909">
    <property type="entry name" value="Pentein"/>
    <property type="match status" value="1"/>
</dbReference>
<organism>
    <name type="scientific">Salmonella typhimurium (strain LT2 / SGSC1412 / ATCC 700720)</name>
    <dbReference type="NCBI Taxonomy" id="99287"/>
    <lineage>
        <taxon>Bacteria</taxon>
        <taxon>Pseudomonadati</taxon>
        <taxon>Pseudomonadota</taxon>
        <taxon>Gammaproteobacteria</taxon>
        <taxon>Enterobacterales</taxon>
        <taxon>Enterobacteriaceae</taxon>
        <taxon>Salmonella</taxon>
    </lineage>
</organism>
<reference key="1">
    <citation type="journal article" date="2001" name="Nature">
        <title>Complete genome sequence of Salmonella enterica serovar Typhimurium LT2.</title>
        <authorList>
            <person name="McClelland M."/>
            <person name="Sanderson K.E."/>
            <person name="Spieth J."/>
            <person name="Clifton S.W."/>
            <person name="Latreille P."/>
            <person name="Courtney L."/>
            <person name="Porwollik S."/>
            <person name="Ali J."/>
            <person name="Dante M."/>
            <person name="Du F."/>
            <person name="Hou S."/>
            <person name="Layman D."/>
            <person name="Leonard S."/>
            <person name="Nguyen C."/>
            <person name="Scott K."/>
            <person name="Holmes A."/>
            <person name="Grewal N."/>
            <person name="Mulvaney E."/>
            <person name="Ryan E."/>
            <person name="Sun H."/>
            <person name="Florea L."/>
            <person name="Miller W."/>
            <person name="Stoneking T."/>
            <person name="Nhan M."/>
            <person name="Waterston R."/>
            <person name="Wilson R.K."/>
        </authorList>
    </citation>
    <scope>NUCLEOTIDE SEQUENCE [LARGE SCALE GENOMIC DNA]</scope>
    <source>
        <strain>LT2 / SGSC1412 / ATCC 700720</strain>
    </source>
</reference>
<protein>
    <recommendedName>
        <fullName evidence="1">Arginine deiminase</fullName>
        <shortName evidence="1">ADI</shortName>
        <ecNumber evidence="1">3.5.3.6</ecNumber>
    </recommendedName>
    <alternativeName>
        <fullName evidence="1">Arginine dihydrolase</fullName>
        <shortName evidence="1">AD</shortName>
    </alternativeName>
</protein>
<gene>
    <name evidence="1" type="primary">arcA</name>
    <name type="ordered locus">STM4467</name>
</gene>
<keyword id="KW-0056">Arginine metabolism</keyword>
<keyword id="KW-0963">Cytoplasm</keyword>
<keyword id="KW-0378">Hydrolase</keyword>
<keyword id="KW-1185">Reference proteome</keyword>
<comment type="catalytic activity">
    <reaction evidence="1">
        <text>L-arginine + H2O = L-citrulline + NH4(+)</text>
        <dbReference type="Rhea" id="RHEA:19597"/>
        <dbReference type="ChEBI" id="CHEBI:15377"/>
        <dbReference type="ChEBI" id="CHEBI:28938"/>
        <dbReference type="ChEBI" id="CHEBI:32682"/>
        <dbReference type="ChEBI" id="CHEBI:57743"/>
        <dbReference type="EC" id="3.5.3.6"/>
    </reaction>
</comment>
<comment type="pathway">
    <text evidence="1">Amino-acid degradation; L-arginine degradation via ADI pathway; carbamoyl phosphate from L-arginine: step 1/2.</text>
</comment>
<comment type="subcellular location">
    <subcellularLocation>
        <location evidence="1">Cytoplasm</location>
    </subcellularLocation>
</comment>
<comment type="similarity">
    <text evidence="1">Belongs to the arginine deiminase family.</text>
</comment>
<accession>Q8ZK33</accession>
<feature type="chain" id="PRO_0000182233" description="Arginine deiminase">
    <location>
        <begin position="1"/>
        <end position="406"/>
    </location>
</feature>
<feature type="active site" description="Amidino-cysteine intermediate" evidence="1">
    <location>
        <position position="396"/>
    </location>
</feature>
<sequence length="406" mass="45562">MEKHFVGSEIGQLRSVMLHRPNLSLKRLTPSNCQELLFDDVLSVERAGEEHDIFANTLRQQGIEVLLLTDLLTQTLDVADAKAWLLDTQISDYRLGPTFAADIRAWLADMPHRELARHLSGGLTYGEIPASIKNMVVDTHDINDFIMKPLPNHLFTRDTSCWIYNGVSINPMAKPARQRETNNLRAIYRWHPQFAGGDFIKYFGDEDINYDHATLEGGDVLVIGRGAVLIGMSERTTPQGVEFLAQALFKHRQAERVIAVELPKHRSCMHLDTVMTHIDIDTFSVYPEVVRPDVQCWTLTPDGRGGLKRTQESTLVHALETALGIDQVRLITTGGDAFEAEREQWNDANNVLTLRPGVVVGYERNIWTNEKYDKAGITVLPIPGDELGRGRGGARCMSCPLERDGI</sequence>